<evidence type="ECO:0000255" key="1">
    <source>
        <dbReference type="HAMAP-Rule" id="MF_00175"/>
    </source>
</evidence>
<evidence type="ECO:0000255" key="2">
    <source>
        <dbReference type="PROSITE-ProRule" id="PRU01250"/>
    </source>
</evidence>
<accession>B2HNG2</accession>
<reference key="1">
    <citation type="journal article" date="2008" name="Genome Res.">
        <title>Insights from the complete genome sequence of Mycobacterium marinum on the evolution of Mycobacterium tuberculosis.</title>
        <authorList>
            <person name="Stinear T.P."/>
            <person name="Seemann T."/>
            <person name="Harrison P.F."/>
            <person name="Jenkin G.A."/>
            <person name="Davies J.K."/>
            <person name="Johnson P.D."/>
            <person name="Abdellah Z."/>
            <person name="Arrowsmith C."/>
            <person name="Chillingworth T."/>
            <person name="Churcher C."/>
            <person name="Clarke K."/>
            <person name="Cronin A."/>
            <person name="Davis P."/>
            <person name="Goodhead I."/>
            <person name="Holroyd N."/>
            <person name="Jagels K."/>
            <person name="Lord A."/>
            <person name="Moule S."/>
            <person name="Mungall K."/>
            <person name="Norbertczak H."/>
            <person name="Quail M.A."/>
            <person name="Rabbinowitsch E."/>
            <person name="Walker D."/>
            <person name="White B."/>
            <person name="Whitehead S."/>
            <person name="Small P.L."/>
            <person name="Brosch R."/>
            <person name="Ramakrishnan L."/>
            <person name="Fischbach M.A."/>
            <person name="Parkhill J."/>
            <person name="Cole S.T."/>
        </authorList>
    </citation>
    <scope>NUCLEOTIDE SEQUENCE [LARGE SCALE GENOMIC DNA]</scope>
    <source>
        <strain>ATCC BAA-535 / M</strain>
    </source>
</reference>
<name>CLPX_MYCMM</name>
<protein>
    <recommendedName>
        <fullName evidence="1">ATP-dependent Clp protease ATP-binding subunit ClpX</fullName>
    </recommendedName>
</protein>
<sequence>MARIGDGGDLLKCSFCGKSQKQVKKLIAGPGVYICDECIDLCNEIIEEELADADDVKLDELPKPVEIREFLEGYVIGQDTAKRTLAVAVYNHYKRIQAGEKSRDSRCEAVELTKSNILMLGPTGCGKTYLAQTLAKMLNVPFAIADATALTEAGYVGEDVENILLKLIQAADYDVKRAETGIIYIDEVDKIARKSENPSITRDVSGEGVQQALLKILEGTQASVPPQGGRKHPHQEFIQIDTTNVLFIVAGAFAGLEKIIYERVGKRGLGFGAEVRSKAEIDTTDHFAEVMPEDLIKFGLIPEFIGRLPVVASVTNLDKESLVKILSEPKNALVKQYTRLFEMDGVELEFTDDALEAIADQAIHRGTGARGLRAIMEEVLLPVMYDIPSRDDVAKVVVTKETVQDNVLPTIVPRKPSRSERRDKSA</sequence>
<proteinExistence type="inferred from homology"/>
<comment type="function">
    <text evidence="1">ATP-dependent specificity component of the Clp protease. It directs the protease to specific substrates. Can perform chaperone functions in the absence of ClpP.</text>
</comment>
<comment type="subunit">
    <text evidence="1">Component of the ClpX-ClpP complex. Forms a hexameric ring that, in the presence of ATP, binds to fourteen ClpP subunits assembled into a disk-like structure with a central cavity, resembling the structure of eukaryotic proteasomes.</text>
</comment>
<comment type="similarity">
    <text evidence="1">Belongs to the ClpX chaperone family.</text>
</comment>
<organism>
    <name type="scientific">Mycobacterium marinum (strain ATCC BAA-535 / M)</name>
    <dbReference type="NCBI Taxonomy" id="216594"/>
    <lineage>
        <taxon>Bacteria</taxon>
        <taxon>Bacillati</taxon>
        <taxon>Actinomycetota</taxon>
        <taxon>Actinomycetes</taxon>
        <taxon>Mycobacteriales</taxon>
        <taxon>Mycobacteriaceae</taxon>
        <taxon>Mycobacterium</taxon>
        <taxon>Mycobacterium ulcerans group</taxon>
    </lineage>
</organism>
<feature type="chain" id="PRO_1000097973" description="ATP-dependent Clp protease ATP-binding subunit ClpX">
    <location>
        <begin position="1"/>
        <end position="426"/>
    </location>
</feature>
<feature type="domain" description="ClpX-type ZB" evidence="2">
    <location>
        <begin position="1"/>
        <end position="54"/>
    </location>
</feature>
<feature type="binding site" evidence="2">
    <location>
        <position position="13"/>
    </location>
    <ligand>
        <name>Zn(2+)</name>
        <dbReference type="ChEBI" id="CHEBI:29105"/>
    </ligand>
</feature>
<feature type="binding site" evidence="2">
    <location>
        <position position="16"/>
    </location>
    <ligand>
        <name>Zn(2+)</name>
        <dbReference type="ChEBI" id="CHEBI:29105"/>
    </ligand>
</feature>
<feature type="binding site" evidence="2">
    <location>
        <position position="35"/>
    </location>
    <ligand>
        <name>Zn(2+)</name>
        <dbReference type="ChEBI" id="CHEBI:29105"/>
    </ligand>
</feature>
<feature type="binding site" evidence="2">
    <location>
        <position position="38"/>
    </location>
    <ligand>
        <name>Zn(2+)</name>
        <dbReference type="ChEBI" id="CHEBI:29105"/>
    </ligand>
</feature>
<feature type="binding site" evidence="1">
    <location>
        <begin position="122"/>
        <end position="129"/>
    </location>
    <ligand>
        <name>ATP</name>
        <dbReference type="ChEBI" id="CHEBI:30616"/>
    </ligand>
</feature>
<keyword id="KW-0067">ATP-binding</keyword>
<keyword id="KW-0143">Chaperone</keyword>
<keyword id="KW-0479">Metal-binding</keyword>
<keyword id="KW-0547">Nucleotide-binding</keyword>
<keyword id="KW-1185">Reference proteome</keyword>
<keyword id="KW-0862">Zinc</keyword>
<dbReference type="EMBL" id="CP000854">
    <property type="protein sequence ID" value="ACC42215.1"/>
    <property type="molecule type" value="Genomic_DNA"/>
</dbReference>
<dbReference type="RefSeq" id="WP_012395407.1">
    <property type="nucleotide sequence ID" value="NC_010612.1"/>
</dbReference>
<dbReference type="SMR" id="B2HNG2"/>
<dbReference type="STRING" id="216594.MMAR_3805"/>
<dbReference type="GeneID" id="93438127"/>
<dbReference type="KEGG" id="mmi:MMAR_3805"/>
<dbReference type="eggNOG" id="COG1219">
    <property type="taxonomic scope" value="Bacteria"/>
</dbReference>
<dbReference type="HOGENOM" id="CLU_014218_8_2_11"/>
<dbReference type="OrthoDB" id="9804062at2"/>
<dbReference type="Proteomes" id="UP000001190">
    <property type="component" value="Chromosome"/>
</dbReference>
<dbReference type="GO" id="GO:0009376">
    <property type="term" value="C:HslUV protease complex"/>
    <property type="evidence" value="ECO:0007669"/>
    <property type="project" value="TreeGrafter"/>
</dbReference>
<dbReference type="GO" id="GO:0005524">
    <property type="term" value="F:ATP binding"/>
    <property type="evidence" value="ECO:0007669"/>
    <property type="project" value="UniProtKB-UniRule"/>
</dbReference>
<dbReference type="GO" id="GO:0016887">
    <property type="term" value="F:ATP hydrolysis activity"/>
    <property type="evidence" value="ECO:0007669"/>
    <property type="project" value="InterPro"/>
</dbReference>
<dbReference type="GO" id="GO:0140662">
    <property type="term" value="F:ATP-dependent protein folding chaperone"/>
    <property type="evidence" value="ECO:0007669"/>
    <property type="project" value="InterPro"/>
</dbReference>
<dbReference type="GO" id="GO:0046983">
    <property type="term" value="F:protein dimerization activity"/>
    <property type="evidence" value="ECO:0007669"/>
    <property type="project" value="InterPro"/>
</dbReference>
<dbReference type="GO" id="GO:0051082">
    <property type="term" value="F:unfolded protein binding"/>
    <property type="evidence" value="ECO:0007669"/>
    <property type="project" value="UniProtKB-UniRule"/>
</dbReference>
<dbReference type="GO" id="GO:0008270">
    <property type="term" value="F:zinc ion binding"/>
    <property type="evidence" value="ECO:0007669"/>
    <property type="project" value="InterPro"/>
</dbReference>
<dbReference type="GO" id="GO:0051301">
    <property type="term" value="P:cell division"/>
    <property type="evidence" value="ECO:0007669"/>
    <property type="project" value="TreeGrafter"/>
</dbReference>
<dbReference type="GO" id="GO:0051603">
    <property type="term" value="P:proteolysis involved in protein catabolic process"/>
    <property type="evidence" value="ECO:0007669"/>
    <property type="project" value="TreeGrafter"/>
</dbReference>
<dbReference type="CDD" id="cd19497">
    <property type="entry name" value="RecA-like_ClpX"/>
    <property type="match status" value="1"/>
</dbReference>
<dbReference type="FunFam" id="1.10.8.60:FF:000002">
    <property type="entry name" value="ATP-dependent Clp protease ATP-binding subunit ClpX"/>
    <property type="match status" value="1"/>
</dbReference>
<dbReference type="FunFam" id="3.40.50.300:FF:000005">
    <property type="entry name" value="ATP-dependent Clp protease ATP-binding subunit ClpX"/>
    <property type="match status" value="1"/>
</dbReference>
<dbReference type="Gene3D" id="1.10.8.60">
    <property type="match status" value="1"/>
</dbReference>
<dbReference type="Gene3D" id="6.20.220.10">
    <property type="entry name" value="ClpX chaperone, C4-type zinc finger domain"/>
    <property type="match status" value="1"/>
</dbReference>
<dbReference type="Gene3D" id="3.40.50.300">
    <property type="entry name" value="P-loop containing nucleotide triphosphate hydrolases"/>
    <property type="match status" value="1"/>
</dbReference>
<dbReference type="HAMAP" id="MF_00175">
    <property type="entry name" value="ClpX"/>
    <property type="match status" value="1"/>
</dbReference>
<dbReference type="InterPro" id="IPR003593">
    <property type="entry name" value="AAA+_ATPase"/>
</dbReference>
<dbReference type="InterPro" id="IPR050052">
    <property type="entry name" value="ATP-dep_Clp_protease_ClpX"/>
</dbReference>
<dbReference type="InterPro" id="IPR003959">
    <property type="entry name" value="ATPase_AAA_core"/>
</dbReference>
<dbReference type="InterPro" id="IPR019489">
    <property type="entry name" value="Clp_ATPase_C"/>
</dbReference>
<dbReference type="InterPro" id="IPR004487">
    <property type="entry name" value="Clp_protease_ATP-bd_su_ClpX"/>
</dbReference>
<dbReference type="InterPro" id="IPR046425">
    <property type="entry name" value="ClpX_bact"/>
</dbReference>
<dbReference type="InterPro" id="IPR027417">
    <property type="entry name" value="P-loop_NTPase"/>
</dbReference>
<dbReference type="InterPro" id="IPR010603">
    <property type="entry name" value="Znf_CppX_C4"/>
</dbReference>
<dbReference type="InterPro" id="IPR038366">
    <property type="entry name" value="Znf_CppX_C4_sf"/>
</dbReference>
<dbReference type="NCBIfam" id="TIGR00382">
    <property type="entry name" value="clpX"/>
    <property type="match status" value="1"/>
</dbReference>
<dbReference type="NCBIfam" id="NF003745">
    <property type="entry name" value="PRK05342.1"/>
    <property type="match status" value="1"/>
</dbReference>
<dbReference type="PANTHER" id="PTHR48102:SF7">
    <property type="entry name" value="ATP-DEPENDENT CLP PROTEASE ATP-BINDING SUBUNIT CLPX-LIKE, MITOCHONDRIAL"/>
    <property type="match status" value="1"/>
</dbReference>
<dbReference type="PANTHER" id="PTHR48102">
    <property type="entry name" value="ATP-DEPENDENT CLP PROTEASE ATP-BINDING SUBUNIT CLPX-LIKE, MITOCHONDRIAL-RELATED"/>
    <property type="match status" value="1"/>
</dbReference>
<dbReference type="Pfam" id="PF07724">
    <property type="entry name" value="AAA_2"/>
    <property type="match status" value="1"/>
</dbReference>
<dbReference type="Pfam" id="PF10431">
    <property type="entry name" value="ClpB_D2-small"/>
    <property type="match status" value="1"/>
</dbReference>
<dbReference type="Pfam" id="PF06689">
    <property type="entry name" value="zf-C4_ClpX"/>
    <property type="match status" value="1"/>
</dbReference>
<dbReference type="SMART" id="SM00382">
    <property type="entry name" value="AAA"/>
    <property type="match status" value="1"/>
</dbReference>
<dbReference type="SMART" id="SM01086">
    <property type="entry name" value="ClpB_D2-small"/>
    <property type="match status" value="1"/>
</dbReference>
<dbReference type="SMART" id="SM00994">
    <property type="entry name" value="zf-C4_ClpX"/>
    <property type="match status" value="1"/>
</dbReference>
<dbReference type="SUPFAM" id="SSF57716">
    <property type="entry name" value="Glucocorticoid receptor-like (DNA-binding domain)"/>
    <property type="match status" value="1"/>
</dbReference>
<dbReference type="SUPFAM" id="SSF52540">
    <property type="entry name" value="P-loop containing nucleoside triphosphate hydrolases"/>
    <property type="match status" value="1"/>
</dbReference>
<dbReference type="PROSITE" id="PS51902">
    <property type="entry name" value="CLPX_ZB"/>
    <property type="match status" value="1"/>
</dbReference>
<gene>
    <name evidence="1" type="primary">clpX</name>
    <name type="ordered locus">MMAR_3805</name>
</gene>